<accession>Q6F7T5</accession>
<keyword id="KW-0687">Ribonucleoprotein</keyword>
<keyword id="KW-0689">Ribosomal protein</keyword>
<keyword id="KW-0694">RNA-binding</keyword>
<keyword id="KW-0699">rRNA-binding</keyword>
<protein>
    <recommendedName>
        <fullName evidence="1">Small ribosomal subunit protein uS11</fullName>
    </recommendedName>
    <alternativeName>
        <fullName evidence="2">30S ribosomal protein S11</fullName>
    </alternativeName>
</protein>
<feature type="chain" id="PRO_0000123092" description="Small ribosomal subunit protein uS11">
    <location>
        <begin position="1"/>
        <end position="128"/>
    </location>
</feature>
<proteinExistence type="inferred from homology"/>
<reference key="1">
    <citation type="journal article" date="2004" name="Nucleic Acids Res.">
        <title>Unique features revealed by the genome sequence of Acinetobacter sp. ADP1, a versatile and naturally transformation competent bacterium.</title>
        <authorList>
            <person name="Barbe V."/>
            <person name="Vallenet D."/>
            <person name="Fonknechten N."/>
            <person name="Kreimeyer A."/>
            <person name="Oztas S."/>
            <person name="Labarre L."/>
            <person name="Cruveiller S."/>
            <person name="Robert C."/>
            <person name="Duprat S."/>
            <person name="Wincker P."/>
            <person name="Ornston L.N."/>
            <person name="Weissenbach J."/>
            <person name="Marliere P."/>
            <person name="Cohen G.N."/>
            <person name="Medigue C."/>
        </authorList>
    </citation>
    <scope>NUCLEOTIDE SEQUENCE [LARGE SCALE GENOMIC DNA]</scope>
    <source>
        <strain>ATCC 33305 / BD413 / ADP1</strain>
    </source>
</reference>
<sequence>MAKDTRTRKKVTRTVSEGVAHIHASFNNTIVTITDRQGNALAWATSGGQGFRGSRKSTPFAAQVAAEVAGKAALDYGLKNLDVLVKGPGPGRESAVRALGAVGYKINSITDVTPIPHNGCRPPKKRRV</sequence>
<evidence type="ECO:0000255" key="1">
    <source>
        <dbReference type="HAMAP-Rule" id="MF_01310"/>
    </source>
</evidence>
<evidence type="ECO:0000305" key="2"/>
<comment type="function">
    <text evidence="1">Located on the platform of the 30S subunit, it bridges several disparate RNA helices of the 16S rRNA. Forms part of the Shine-Dalgarno cleft in the 70S ribosome.</text>
</comment>
<comment type="subunit">
    <text evidence="1">Part of the 30S ribosomal subunit. Interacts with proteins S7 and S18. Binds to IF-3.</text>
</comment>
<comment type="similarity">
    <text evidence="1">Belongs to the universal ribosomal protein uS11 family.</text>
</comment>
<dbReference type="EMBL" id="CR543861">
    <property type="protein sequence ID" value="CAG69880.1"/>
    <property type="molecule type" value="Genomic_DNA"/>
</dbReference>
<dbReference type="RefSeq" id="WP_001040166.1">
    <property type="nucleotide sequence ID" value="NC_005966.1"/>
</dbReference>
<dbReference type="SMR" id="Q6F7T5"/>
<dbReference type="STRING" id="202950.GCA_001485005_02959"/>
<dbReference type="GeneID" id="97425222"/>
<dbReference type="KEGG" id="aci:ACIAD3196"/>
<dbReference type="eggNOG" id="COG0100">
    <property type="taxonomic scope" value="Bacteria"/>
</dbReference>
<dbReference type="HOGENOM" id="CLU_072439_5_0_6"/>
<dbReference type="OrthoDB" id="9806415at2"/>
<dbReference type="BioCyc" id="ASP62977:ACIAD_RS14480-MONOMER"/>
<dbReference type="Proteomes" id="UP000000430">
    <property type="component" value="Chromosome"/>
</dbReference>
<dbReference type="GO" id="GO:1990904">
    <property type="term" value="C:ribonucleoprotein complex"/>
    <property type="evidence" value="ECO:0007669"/>
    <property type="project" value="UniProtKB-KW"/>
</dbReference>
<dbReference type="GO" id="GO:0005840">
    <property type="term" value="C:ribosome"/>
    <property type="evidence" value="ECO:0007669"/>
    <property type="project" value="UniProtKB-KW"/>
</dbReference>
<dbReference type="GO" id="GO:0019843">
    <property type="term" value="F:rRNA binding"/>
    <property type="evidence" value="ECO:0007669"/>
    <property type="project" value="UniProtKB-UniRule"/>
</dbReference>
<dbReference type="GO" id="GO:0003735">
    <property type="term" value="F:structural constituent of ribosome"/>
    <property type="evidence" value="ECO:0007669"/>
    <property type="project" value="InterPro"/>
</dbReference>
<dbReference type="GO" id="GO:0006412">
    <property type="term" value="P:translation"/>
    <property type="evidence" value="ECO:0007669"/>
    <property type="project" value="UniProtKB-UniRule"/>
</dbReference>
<dbReference type="FunFam" id="3.30.420.80:FF:000001">
    <property type="entry name" value="30S ribosomal protein S11"/>
    <property type="match status" value="1"/>
</dbReference>
<dbReference type="Gene3D" id="3.30.420.80">
    <property type="entry name" value="Ribosomal protein S11"/>
    <property type="match status" value="1"/>
</dbReference>
<dbReference type="HAMAP" id="MF_01310">
    <property type="entry name" value="Ribosomal_uS11"/>
    <property type="match status" value="1"/>
</dbReference>
<dbReference type="InterPro" id="IPR001971">
    <property type="entry name" value="Ribosomal_uS11"/>
</dbReference>
<dbReference type="InterPro" id="IPR019981">
    <property type="entry name" value="Ribosomal_uS11_bac-type"/>
</dbReference>
<dbReference type="InterPro" id="IPR018102">
    <property type="entry name" value="Ribosomal_uS11_CS"/>
</dbReference>
<dbReference type="InterPro" id="IPR036967">
    <property type="entry name" value="Ribosomal_uS11_sf"/>
</dbReference>
<dbReference type="NCBIfam" id="NF003698">
    <property type="entry name" value="PRK05309.1"/>
    <property type="match status" value="1"/>
</dbReference>
<dbReference type="NCBIfam" id="TIGR03632">
    <property type="entry name" value="uS11_bact"/>
    <property type="match status" value="1"/>
</dbReference>
<dbReference type="PANTHER" id="PTHR11759">
    <property type="entry name" value="40S RIBOSOMAL PROTEIN S14/30S RIBOSOMAL PROTEIN S11"/>
    <property type="match status" value="1"/>
</dbReference>
<dbReference type="Pfam" id="PF00411">
    <property type="entry name" value="Ribosomal_S11"/>
    <property type="match status" value="1"/>
</dbReference>
<dbReference type="PIRSF" id="PIRSF002131">
    <property type="entry name" value="Ribosomal_S11"/>
    <property type="match status" value="1"/>
</dbReference>
<dbReference type="SUPFAM" id="SSF53137">
    <property type="entry name" value="Translational machinery components"/>
    <property type="match status" value="1"/>
</dbReference>
<dbReference type="PROSITE" id="PS00054">
    <property type="entry name" value="RIBOSOMAL_S11"/>
    <property type="match status" value="1"/>
</dbReference>
<organism>
    <name type="scientific">Acinetobacter baylyi (strain ATCC 33305 / BD413 / ADP1)</name>
    <dbReference type="NCBI Taxonomy" id="62977"/>
    <lineage>
        <taxon>Bacteria</taxon>
        <taxon>Pseudomonadati</taxon>
        <taxon>Pseudomonadota</taxon>
        <taxon>Gammaproteobacteria</taxon>
        <taxon>Moraxellales</taxon>
        <taxon>Moraxellaceae</taxon>
        <taxon>Acinetobacter</taxon>
    </lineage>
</organism>
<name>RS11_ACIAD</name>
<gene>
    <name evidence="1" type="primary">rpsK</name>
    <name type="ordered locus">ACIAD3196</name>
</gene>